<organism>
    <name type="scientific">Brucella canis (strain ATCC 23365 / NCTC 10854 / RM-666)</name>
    <dbReference type="NCBI Taxonomy" id="483179"/>
    <lineage>
        <taxon>Bacteria</taxon>
        <taxon>Pseudomonadati</taxon>
        <taxon>Pseudomonadota</taxon>
        <taxon>Alphaproteobacteria</taxon>
        <taxon>Hyphomicrobiales</taxon>
        <taxon>Brucellaceae</taxon>
        <taxon>Brucella/Ochrobactrum group</taxon>
        <taxon>Brucella</taxon>
    </lineage>
</organism>
<sequence>MAKKKDTPGDGEFPGFSDTLQRTPKLEKPHYAGHRDRLKQRFRDAPDALADYELLELLLFRAIRRADTKPIAKALLNRFGSIAEVLAAPENLIAEIPGAGPTVALELKLVEAIAKRSARSTVMEREVLGSWDKVINYCTAAMAFETREQFRILFLDKKNKLIADEVQQTGTVDHTPVYPREVVKRALELSATAIILVHNHPSGDPTPSRADIDMTKQLVNAAKALNITVHDHVIIGKHGHASLRSLRLI</sequence>
<feature type="chain" id="PRO_1000089795" description="UPF0758 protein BCAN_A1306">
    <location>
        <begin position="1"/>
        <end position="249"/>
    </location>
</feature>
<feature type="domain" description="MPN" evidence="1">
    <location>
        <begin position="127"/>
        <end position="249"/>
    </location>
</feature>
<feature type="region of interest" description="Disordered" evidence="2">
    <location>
        <begin position="1"/>
        <end position="34"/>
    </location>
</feature>
<feature type="short sequence motif" description="JAMM motif" evidence="1">
    <location>
        <begin position="198"/>
        <end position="211"/>
    </location>
</feature>
<feature type="compositionally biased region" description="Basic and acidic residues" evidence="2">
    <location>
        <begin position="24"/>
        <end position="34"/>
    </location>
</feature>
<feature type="binding site" evidence="1">
    <location>
        <position position="198"/>
    </location>
    <ligand>
        <name>Zn(2+)</name>
        <dbReference type="ChEBI" id="CHEBI:29105"/>
        <note>catalytic</note>
    </ligand>
</feature>
<feature type="binding site" evidence="1">
    <location>
        <position position="200"/>
    </location>
    <ligand>
        <name>Zn(2+)</name>
        <dbReference type="ChEBI" id="CHEBI:29105"/>
        <note>catalytic</note>
    </ligand>
</feature>
<feature type="binding site" evidence="1">
    <location>
        <position position="211"/>
    </location>
    <ligand>
        <name>Zn(2+)</name>
        <dbReference type="ChEBI" id="CHEBI:29105"/>
        <note>catalytic</note>
    </ligand>
</feature>
<accession>A9M5U5</accession>
<proteinExistence type="inferred from homology"/>
<keyword id="KW-0378">Hydrolase</keyword>
<keyword id="KW-0479">Metal-binding</keyword>
<keyword id="KW-0482">Metalloprotease</keyword>
<keyword id="KW-0645">Protease</keyword>
<keyword id="KW-1185">Reference proteome</keyword>
<keyword id="KW-0862">Zinc</keyword>
<reference key="1">
    <citation type="submission" date="2007-10" db="EMBL/GenBank/DDBJ databases">
        <title>Brucella canis ATCC 23365 whole genome shotgun sequencing project.</title>
        <authorList>
            <person name="Setubal J.C."/>
            <person name="Bowns C."/>
            <person name="Boyle S."/>
            <person name="Crasta O.R."/>
            <person name="Czar M.J."/>
            <person name="Dharmanolla C."/>
            <person name="Gillespie J.J."/>
            <person name="Kenyon R.W."/>
            <person name="Lu J."/>
            <person name="Mane S."/>
            <person name="Mohapatra S."/>
            <person name="Nagrani S."/>
            <person name="Purkayastha A."/>
            <person name="Rajasimha H.K."/>
            <person name="Shallom J.M."/>
            <person name="Shallom S."/>
            <person name="Shukla M."/>
            <person name="Snyder E.E."/>
            <person name="Sobral B.W."/>
            <person name="Wattam A.R."/>
            <person name="Will R."/>
            <person name="Williams K."/>
            <person name="Yoo H."/>
            <person name="Bruce D."/>
            <person name="Detter C."/>
            <person name="Munk C."/>
            <person name="Brettin T.S."/>
        </authorList>
    </citation>
    <scope>NUCLEOTIDE SEQUENCE [LARGE SCALE GENOMIC DNA]</scope>
    <source>
        <strain>ATCC 23365 / NCTC 10854 / RM-666</strain>
    </source>
</reference>
<name>Y1306_BRUC2</name>
<evidence type="ECO:0000255" key="1">
    <source>
        <dbReference type="PROSITE-ProRule" id="PRU01182"/>
    </source>
</evidence>
<evidence type="ECO:0000256" key="2">
    <source>
        <dbReference type="SAM" id="MobiDB-lite"/>
    </source>
</evidence>
<evidence type="ECO:0000305" key="3"/>
<dbReference type="EMBL" id="CP000872">
    <property type="protein sequence ID" value="ABX62350.1"/>
    <property type="molecule type" value="Genomic_DNA"/>
</dbReference>
<dbReference type="SMR" id="A9M5U5"/>
<dbReference type="KEGG" id="bcs:BCAN_A1306"/>
<dbReference type="HOGENOM" id="CLU_073529_0_0_5"/>
<dbReference type="PhylomeDB" id="A9M5U5"/>
<dbReference type="Proteomes" id="UP000001385">
    <property type="component" value="Chromosome I"/>
</dbReference>
<dbReference type="GO" id="GO:0046872">
    <property type="term" value="F:metal ion binding"/>
    <property type="evidence" value="ECO:0007669"/>
    <property type="project" value="UniProtKB-KW"/>
</dbReference>
<dbReference type="GO" id="GO:0008237">
    <property type="term" value="F:metallopeptidase activity"/>
    <property type="evidence" value="ECO:0007669"/>
    <property type="project" value="UniProtKB-KW"/>
</dbReference>
<dbReference type="GO" id="GO:0006508">
    <property type="term" value="P:proteolysis"/>
    <property type="evidence" value="ECO:0007669"/>
    <property type="project" value="UniProtKB-KW"/>
</dbReference>
<dbReference type="CDD" id="cd08071">
    <property type="entry name" value="MPN_DUF2466"/>
    <property type="match status" value="1"/>
</dbReference>
<dbReference type="Gene3D" id="1.10.150.20">
    <property type="entry name" value="5' to 3' exonuclease, C-terminal subdomain"/>
    <property type="match status" value="1"/>
</dbReference>
<dbReference type="Gene3D" id="3.40.140.10">
    <property type="entry name" value="Cytidine Deaminase, domain 2"/>
    <property type="match status" value="1"/>
</dbReference>
<dbReference type="InterPro" id="IPR037518">
    <property type="entry name" value="MPN"/>
</dbReference>
<dbReference type="InterPro" id="IPR025657">
    <property type="entry name" value="RadC_JAB"/>
</dbReference>
<dbReference type="InterPro" id="IPR010994">
    <property type="entry name" value="RuvA_2-like"/>
</dbReference>
<dbReference type="InterPro" id="IPR001405">
    <property type="entry name" value="UPF0758"/>
</dbReference>
<dbReference type="InterPro" id="IPR020891">
    <property type="entry name" value="UPF0758_CS"/>
</dbReference>
<dbReference type="NCBIfam" id="NF000642">
    <property type="entry name" value="PRK00024.1"/>
    <property type="match status" value="1"/>
</dbReference>
<dbReference type="NCBIfam" id="TIGR00608">
    <property type="entry name" value="radc"/>
    <property type="match status" value="1"/>
</dbReference>
<dbReference type="PANTHER" id="PTHR30471">
    <property type="entry name" value="DNA REPAIR PROTEIN RADC"/>
    <property type="match status" value="1"/>
</dbReference>
<dbReference type="PANTHER" id="PTHR30471:SF3">
    <property type="entry name" value="UPF0758 PROTEIN YEES-RELATED"/>
    <property type="match status" value="1"/>
</dbReference>
<dbReference type="Pfam" id="PF04002">
    <property type="entry name" value="RadC"/>
    <property type="match status" value="1"/>
</dbReference>
<dbReference type="SUPFAM" id="SSF102712">
    <property type="entry name" value="JAB1/MPN domain"/>
    <property type="match status" value="1"/>
</dbReference>
<dbReference type="SUPFAM" id="SSF47781">
    <property type="entry name" value="RuvA domain 2-like"/>
    <property type="match status" value="1"/>
</dbReference>
<dbReference type="PROSITE" id="PS50249">
    <property type="entry name" value="MPN"/>
    <property type="match status" value="1"/>
</dbReference>
<dbReference type="PROSITE" id="PS01302">
    <property type="entry name" value="UPF0758"/>
    <property type="match status" value="1"/>
</dbReference>
<gene>
    <name type="ordered locus">BCAN_A1306</name>
</gene>
<comment type="similarity">
    <text evidence="3">Belongs to the UPF0758 family.</text>
</comment>
<protein>
    <recommendedName>
        <fullName>UPF0758 protein BCAN_A1306</fullName>
    </recommendedName>
</protein>